<keyword id="KW-0066">ATP synthesis</keyword>
<keyword id="KW-0067">ATP-binding</keyword>
<keyword id="KW-0997">Cell inner membrane</keyword>
<keyword id="KW-1003">Cell membrane</keyword>
<keyword id="KW-0139">CF(1)</keyword>
<keyword id="KW-0375">Hydrogen ion transport</keyword>
<keyword id="KW-0406">Ion transport</keyword>
<keyword id="KW-0472">Membrane</keyword>
<keyword id="KW-0547">Nucleotide-binding</keyword>
<keyword id="KW-1278">Translocase</keyword>
<keyword id="KW-0813">Transport</keyword>
<feature type="chain" id="PRO_1000086917" description="ATP synthase subunit beta">
    <location>
        <begin position="1"/>
        <end position="458"/>
    </location>
</feature>
<feature type="binding site" evidence="1">
    <location>
        <begin position="148"/>
        <end position="155"/>
    </location>
    <ligand>
        <name>ATP</name>
        <dbReference type="ChEBI" id="CHEBI:30616"/>
    </ligand>
</feature>
<protein>
    <recommendedName>
        <fullName evidence="1">ATP synthase subunit beta</fullName>
        <ecNumber evidence="1">7.1.2.2</ecNumber>
    </recommendedName>
    <alternativeName>
        <fullName evidence="1">ATP synthase F1 sector subunit beta</fullName>
    </alternativeName>
    <alternativeName>
        <fullName evidence="1">F-ATPase subunit beta</fullName>
    </alternativeName>
</protein>
<dbReference type="EC" id="7.1.2.2" evidence="1"/>
<dbReference type="EMBL" id="CP000926">
    <property type="protein sequence ID" value="ABZ01313.1"/>
    <property type="molecule type" value="Genomic_DNA"/>
</dbReference>
<dbReference type="RefSeq" id="WP_012274909.1">
    <property type="nucleotide sequence ID" value="NC_010322.1"/>
</dbReference>
<dbReference type="SMR" id="B0KRA8"/>
<dbReference type="KEGG" id="ppg:PputGB1_5431"/>
<dbReference type="eggNOG" id="COG0055">
    <property type="taxonomic scope" value="Bacteria"/>
</dbReference>
<dbReference type="HOGENOM" id="CLU_022398_0_2_6"/>
<dbReference type="Proteomes" id="UP000002157">
    <property type="component" value="Chromosome"/>
</dbReference>
<dbReference type="GO" id="GO:0005886">
    <property type="term" value="C:plasma membrane"/>
    <property type="evidence" value="ECO:0007669"/>
    <property type="project" value="UniProtKB-SubCell"/>
</dbReference>
<dbReference type="GO" id="GO:0045259">
    <property type="term" value="C:proton-transporting ATP synthase complex"/>
    <property type="evidence" value="ECO:0007669"/>
    <property type="project" value="UniProtKB-KW"/>
</dbReference>
<dbReference type="GO" id="GO:0005524">
    <property type="term" value="F:ATP binding"/>
    <property type="evidence" value="ECO:0007669"/>
    <property type="project" value="UniProtKB-UniRule"/>
</dbReference>
<dbReference type="GO" id="GO:0016887">
    <property type="term" value="F:ATP hydrolysis activity"/>
    <property type="evidence" value="ECO:0007669"/>
    <property type="project" value="InterPro"/>
</dbReference>
<dbReference type="GO" id="GO:0046933">
    <property type="term" value="F:proton-transporting ATP synthase activity, rotational mechanism"/>
    <property type="evidence" value="ECO:0007669"/>
    <property type="project" value="UniProtKB-UniRule"/>
</dbReference>
<dbReference type="CDD" id="cd18110">
    <property type="entry name" value="ATP-synt_F1_beta_C"/>
    <property type="match status" value="1"/>
</dbReference>
<dbReference type="CDD" id="cd18115">
    <property type="entry name" value="ATP-synt_F1_beta_N"/>
    <property type="match status" value="1"/>
</dbReference>
<dbReference type="CDD" id="cd01133">
    <property type="entry name" value="F1-ATPase_beta_CD"/>
    <property type="match status" value="1"/>
</dbReference>
<dbReference type="FunFam" id="1.10.1140.10:FF:000001">
    <property type="entry name" value="ATP synthase subunit beta"/>
    <property type="match status" value="1"/>
</dbReference>
<dbReference type="FunFam" id="3.40.50.300:FF:000004">
    <property type="entry name" value="ATP synthase subunit beta"/>
    <property type="match status" value="1"/>
</dbReference>
<dbReference type="Gene3D" id="2.40.10.170">
    <property type="match status" value="1"/>
</dbReference>
<dbReference type="Gene3D" id="1.10.1140.10">
    <property type="entry name" value="Bovine Mitochondrial F1-atpase, Atp Synthase Beta Chain, Chain D, domain 3"/>
    <property type="match status" value="1"/>
</dbReference>
<dbReference type="Gene3D" id="3.40.50.300">
    <property type="entry name" value="P-loop containing nucleotide triphosphate hydrolases"/>
    <property type="match status" value="1"/>
</dbReference>
<dbReference type="HAMAP" id="MF_01347">
    <property type="entry name" value="ATP_synth_beta_bact"/>
    <property type="match status" value="1"/>
</dbReference>
<dbReference type="InterPro" id="IPR003593">
    <property type="entry name" value="AAA+_ATPase"/>
</dbReference>
<dbReference type="InterPro" id="IPR055190">
    <property type="entry name" value="ATP-synt_VA_C"/>
</dbReference>
<dbReference type="InterPro" id="IPR005722">
    <property type="entry name" value="ATP_synth_F1_bsu"/>
</dbReference>
<dbReference type="InterPro" id="IPR020003">
    <property type="entry name" value="ATPase_a/bsu_AS"/>
</dbReference>
<dbReference type="InterPro" id="IPR050053">
    <property type="entry name" value="ATPase_alpha/beta_chains"/>
</dbReference>
<dbReference type="InterPro" id="IPR004100">
    <property type="entry name" value="ATPase_F1/V1/A1_a/bsu_N"/>
</dbReference>
<dbReference type="InterPro" id="IPR036121">
    <property type="entry name" value="ATPase_F1/V1/A1_a/bsu_N_sf"/>
</dbReference>
<dbReference type="InterPro" id="IPR000194">
    <property type="entry name" value="ATPase_F1/V1/A1_a/bsu_nucl-bd"/>
</dbReference>
<dbReference type="InterPro" id="IPR024034">
    <property type="entry name" value="ATPase_F1/V1_b/a_C"/>
</dbReference>
<dbReference type="InterPro" id="IPR027417">
    <property type="entry name" value="P-loop_NTPase"/>
</dbReference>
<dbReference type="NCBIfam" id="TIGR01039">
    <property type="entry name" value="atpD"/>
    <property type="match status" value="1"/>
</dbReference>
<dbReference type="PANTHER" id="PTHR15184">
    <property type="entry name" value="ATP SYNTHASE"/>
    <property type="match status" value="1"/>
</dbReference>
<dbReference type="PANTHER" id="PTHR15184:SF71">
    <property type="entry name" value="ATP SYNTHASE SUBUNIT BETA, MITOCHONDRIAL"/>
    <property type="match status" value="1"/>
</dbReference>
<dbReference type="Pfam" id="PF00006">
    <property type="entry name" value="ATP-synt_ab"/>
    <property type="match status" value="1"/>
</dbReference>
<dbReference type="Pfam" id="PF02874">
    <property type="entry name" value="ATP-synt_ab_N"/>
    <property type="match status" value="1"/>
</dbReference>
<dbReference type="Pfam" id="PF22919">
    <property type="entry name" value="ATP-synt_VA_C"/>
    <property type="match status" value="1"/>
</dbReference>
<dbReference type="SMART" id="SM00382">
    <property type="entry name" value="AAA"/>
    <property type="match status" value="1"/>
</dbReference>
<dbReference type="SUPFAM" id="SSF47917">
    <property type="entry name" value="C-terminal domain of alpha and beta subunits of F1 ATP synthase"/>
    <property type="match status" value="1"/>
</dbReference>
<dbReference type="SUPFAM" id="SSF50615">
    <property type="entry name" value="N-terminal domain of alpha and beta subunits of F1 ATP synthase"/>
    <property type="match status" value="1"/>
</dbReference>
<dbReference type="SUPFAM" id="SSF52540">
    <property type="entry name" value="P-loop containing nucleoside triphosphate hydrolases"/>
    <property type="match status" value="1"/>
</dbReference>
<dbReference type="PROSITE" id="PS00152">
    <property type="entry name" value="ATPASE_ALPHA_BETA"/>
    <property type="match status" value="1"/>
</dbReference>
<name>ATPB_PSEPG</name>
<sequence length="458" mass="49389">MSSGRIVQIIGAVIDVEFPRDVVPSVYNALKVQGAETTLEVQQQLGDGVVRTIAMGSTEGLKRGLDVVDTGAAISVPVGKATLGRIMDVLGNPIDEAGPIGEEERRGIHQPAPSFADQAGGNDLLETGIKVIDLVCPFAKGGKVGLFGGAGVGKTVNMMELIRNIAMEHSGYSVFAGVGERTREGNDFYHEMKDSNVLDKVALVYGQMNEPPGNRLRVALTGLTMAEKFRDEGNDVLLFVDNIYRYTLAGTEVSALLGRMPSAVGYQPTLAEEMGVLQERITSTKEGSITSVQAVYVPADDLTDPSPATTFAHLDATVVLSRDIASLGIYPAVDPLDSTSRQLDPNVIGNEHYDTARGVQYVLQRYKELKDIIAILGMDELSEDDKQLVARARKIQRFLSQPFFVAEVFTGSPGKYVSLKDTIAGFSGILKGDYDHLPEQAFYMVGSIDEAIEKAKKL</sequence>
<evidence type="ECO:0000255" key="1">
    <source>
        <dbReference type="HAMAP-Rule" id="MF_01347"/>
    </source>
</evidence>
<comment type="function">
    <text evidence="1">Produces ATP from ADP in the presence of a proton gradient across the membrane. The catalytic sites are hosted primarily by the beta subunits.</text>
</comment>
<comment type="catalytic activity">
    <reaction evidence="1">
        <text>ATP + H2O + 4 H(+)(in) = ADP + phosphate + 5 H(+)(out)</text>
        <dbReference type="Rhea" id="RHEA:57720"/>
        <dbReference type="ChEBI" id="CHEBI:15377"/>
        <dbReference type="ChEBI" id="CHEBI:15378"/>
        <dbReference type="ChEBI" id="CHEBI:30616"/>
        <dbReference type="ChEBI" id="CHEBI:43474"/>
        <dbReference type="ChEBI" id="CHEBI:456216"/>
        <dbReference type="EC" id="7.1.2.2"/>
    </reaction>
</comment>
<comment type="subunit">
    <text evidence="1">F-type ATPases have 2 components, CF(1) - the catalytic core - and CF(0) - the membrane proton channel. CF(1) has five subunits: alpha(3), beta(3), gamma(1), delta(1), epsilon(1). CF(0) has three main subunits: a(1), b(2) and c(9-12). The alpha and beta chains form an alternating ring which encloses part of the gamma chain. CF(1) is attached to CF(0) by a central stalk formed by the gamma and epsilon chains, while a peripheral stalk is formed by the delta and b chains.</text>
</comment>
<comment type="subcellular location">
    <subcellularLocation>
        <location evidence="1">Cell inner membrane</location>
        <topology evidence="1">Peripheral membrane protein</topology>
    </subcellularLocation>
</comment>
<comment type="similarity">
    <text evidence="1">Belongs to the ATPase alpha/beta chains family.</text>
</comment>
<proteinExistence type="inferred from homology"/>
<reference key="1">
    <citation type="submission" date="2008-01" db="EMBL/GenBank/DDBJ databases">
        <title>Complete sequence of Pseudomonas putida GB-1.</title>
        <authorList>
            <consortium name="US DOE Joint Genome Institute"/>
            <person name="Copeland A."/>
            <person name="Lucas S."/>
            <person name="Lapidus A."/>
            <person name="Barry K."/>
            <person name="Glavina del Rio T."/>
            <person name="Dalin E."/>
            <person name="Tice H."/>
            <person name="Pitluck S."/>
            <person name="Bruce D."/>
            <person name="Goodwin L."/>
            <person name="Chertkov O."/>
            <person name="Brettin T."/>
            <person name="Detter J.C."/>
            <person name="Han C."/>
            <person name="Kuske C.R."/>
            <person name="Schmutz J."/>
            <person name="Larimer F."/>
            <person name="Land M."/>
            <person name="Hauser L."/>
            <person name="Kyrpides N."/>
            <person name="Kim E."/>
            <person name="McCarthy J.K."/>
            <person name="Richardson P."/>
        </authorList>
    </citation>
    <scope>NUCLEOTIDE SEQUENCE [LARGE SCALE GENOMIC DNA]</scope>
    <source>
        <strain>GB-1</strain>
    </source>
</reference>
<accession>B0KRA8</accession>
<organism>
    <name type="scientific">Pseudomonas putida (strain GB-1)</name>
    <dbReference type="NCBI Taxonomy" id="76869"/>
    <lineage>
        <taxon>Bacteria</taxon>
        <taxon>Pseudomonadati</taxon>
        <taxon>Pseudomonadota</taxon>
        <taxon>Gammaproteobacteria</taxon>
        <taxon>Pseudomonadales</taxon>
        <taxon>Pseudomonadaceae</taxon>
        <taxon>Pseudomonas</taxon>
    </lineage>
</organism>
<gene>
    <name evidence="1" type="primary">atpD</name>
    <name type="ordered locus">PputGB1_5431</name>
</gene>